<reference key="1">
    <citation type="journal article" date="2008" name="PLoS ONE">
        <title>A recalibrated molecular clock and independent origins for the cholera pandemic clones.</title>
        <authorList>
            <person name="Feng L."/>
            <person name="Reeves P.R."/>
            <person name="Lan R."/>
            <person name="Ren Y."/>
            <person name="Gao C."/>
            <person name="Zhou Z."/>
            <person name="Ren Y."/>
            <person name="Cheng J."/>
            <person name="Wang W."/>
            <person name="Wang J."/>
            <person name="Qian W."/>
            <person name="Li D."/>
            <person name="Wang L."/>
        </authorList>
    </citation>
    <scope>NUCLEOTIDE SEQUENCE [LARGE SCALE GENOMIC DNA]</scope>
    <source>
        <strain>M66-2</strain>
    </source>
</reference>
<comment type="function">
    <text evidence="1">RNA chaperone that binds small regulatory RNA (sRNAs) and mRNAs to facilitate mRNA translational regulation in response to envelope stress, environmental stress and changes in metabolite concentrations. Also binds with high specificity to tRNAs.</text>
</comment>
<comment type="subunit">
    <text evidence="1">Homohexamer.</text>
</comment>
<comment type="similarity">
    <text evidence="1">Belongs to the Hfq family.</text>
</comment>
<organism>
    <name type="scientific">Vibrio cholerae serotype O1 (strain M66-2)</name>
    <dbReference type="NCBI Taxonomy" id="579112"/>
    <lineage>
        <taxon>Bacteria</taxon>
        <taxon>Pseudomonadati</taxon>
        <taxon>Pseudomonadota</taxon>
        <taxon>Gammaproteobacteria</taxon>
        <taxon>Vibrionales</taxon>
        <taxon>Vibrionaceae</taxon>
        <taxon>Vibrio</taxon>
    </lineage>
</organism>
<sequence length="87" mass="9769">MAKGQSLQDPFLNALRRERIPVSIYLVNGIKLQGQIESFDQFVILLKNTVNQMVYKHAISTVVPARPVSHHSGDRPASDRPAEKSEE</sequence>
<feature type="chain" id="PRO_1000135044" description="RNA-binding protein Hfq">
    <location>
        <begin position="1"/>
        <end position="87"/>
    </location>
</feature>
<feature type="domain" description="Sm" evidence="2">
    <location>
        <begin position="9"/>
        <end position="68"/>
    </location>
</feature>
<feature type="region of interest" description="Disordered" evidence="3">
    <location>
        <begin position="65"/>
        <end position="87"/>
    </location>
</feature>
<feature type="compositionally biased region" description="Basic and acidic residues" evidence="3">
    <location>
        <begin position="71"/>
        <end position="87"/>
    </location>
</feature>
<proteinExistence type="inferred from homology"/>
<gene>
    <name evidence="1" type="primary">hfq</name>
    <name type="ordered locus">VCM66_0331</name>
</gene>
<dbReference type="EMBL" id="CP001233">
    <property type="protein sequence ID" value="ACP04659.1"/>
    <property type="molecule type" value="Genomic_DNA"/>
</dbReference>
<dbReference type="RefSeq" id="WP_001051872.1">
    <property type="nucleotide sequence ID" value="NC_012578.1"/>
</dbReference>
<dbReference type="SMR" id="C3LR79"/>
<dbReference type="GeneID" id="94014871"/>
<dbReference type="KEGG" id="vcm:VCM66_0331"/>
<dbReference type="HOGENOM" id="CLU_113688_2_2_6"/>
<dbReference type="Proteomes" id="UP000001217">
    <property type="component" value="Chromosome I"/>
</dbReference>
<dbReference type="GO" id="GO:0005829">
    <property type="term" value="C:cytosol"/>
    <property type="evidence" value="ECO:0007669"/>
    <property type="project" value="TreeGrafter"/>
</dbReference>
<dbReference type="GO" id="GO:0003723">
    <property type="term" value="F:RNA binding"/>
    <property type="evidence" value="ECO:0007669"/>
    <property type="project" value="UniProtKB-UniRule"/>
</dbReference>
<dbReference type="GO" id="GO:0006355">
    <property type="term" value="P:regulation of DNA-templated transcription"/>
    <property type="evidence" value="ECO:0007669"/>
    <property type="project" value="InterPro"/>
</dbReference>
<dbReference type="GO" id="GO:0043487">
    <property type="term" value="P:regulation of RNA stability"/>
    <property type="evidence" value="ECO:0007669"/>
    <property type="project" value="TreeGrafter"/>
</dbReference>
<dbReference type="GO" id="GO:0045974">
    <property type="term" value="P:regulation of translation, ncRNA-mediated"/>
    <property type="evidence" value="ECO:0007669"/>
    <property type="project" value="TreeGrafter"/>
</dbReference>
<dbReference type="CDD" id="cd01716">
    <property type="entry name" value="Hfq"/>
    <property type="match status" value="1"/>
</dbReference>
<dbReference type="FunFam" id="2.30.30.100:FF:000001">
    <property type="entry name" value="RNA-binding protein Hfq"/>
    <property type="match status" value="1"/>
</dbReference>
<dbReference type="Gene3D" id="2.30.30.100">
    <property type="match status" value="1"/>
</dbReference>
<dbReference type="HAMAP" id="MF_00436">
    <property type="entry name" value="Hfq"/>
    <property type="match status" value="1"/>
</dbReference>
<dbReference type="InterPro" id="IPR005001">
    <property type="entry name" value="Hfq"/>
</dbReference>
<dbReference type="InterPro" id="IPR010920">
    <property type="entry name" value="LSM_dom_sf"/>
</dbReference>
<dbReference type="InterPro" id="IPR047575">
    <property type="entry name" value="Sm"/>
</dbReference>
<dbReference type="NCBIfam" id="TIGR02383">
    <property type="entry name" value="Hfq"/>
    <property type="match status" value="1"/>
</dbReference>
<dbReference type="NCBIfam" id="NF001602">
    <property type="entry name" value="PRK00395.1"/>
    <property type="match status" value="1"/>
</dbReference>
<dbReference type="PANTHER" id="PTHR34772">
    <property type="entry name" value="RNA-BINDING PROTEIN HFQ"/>
    <property type="match status" value="1"/>
</dbReference>
<dbReference type="PANTHER" id="PTHR34772:SF1">
    <property type="entry name" value="RNA-BINDING PROTEIN HFQ"/>
    <property type="match status" value="1"/>
</dbReference>
<dbReference type="Pfam" id="PF17209">
    <property type="entry name" value="Hfq"/>
    <property type="match status" value="1"/>
</dbReference>
<dbReference type="SUPFAM" id="SSF50182">
    <property type="entry name" value="Sm-like ribonucleoproteins"/>
    <property type="match status" value="1"/>
</dbReference>
<dbReference type="PROSITE" id="PS52002">
    <property type="entry name" value="SM"/>
    <property type="match status" value="1"/>
</dbReference>
<evidence type="ECO:0000255" key="1">
    <source>
        <dbReference type="HAMAP-Rule" id="MF_00436"/>
    </source>
</evidence>
<evidence type="ECO:0000255" key="2">
    <source>
        <dbReference type="PROSITE-ProRule" id="PRU01346"/>
    </source>
</evidence>
<evidence type="ECO:0000256" key="3">
    <source>
        <dbReference type="SAM" id="MobiDB-lite"/>
    </source>
</evidence>
<keyword id="KW-0694">RNA-binding</keyword>
<keyword id="KW-0346">Stress response</keyword>
<protein>
    <recommendedName>
        <fullName evidence="1">RNA-binding protein Hfq</fullName>
    </recommendedName>
</protein>
<name>HFQ_VIBCM</name>
<accession>C3LR79</accession>